<accession>Q04475</accession>
<dbReference type="EMBL" id="L05383">
    <property type="protein sequence ID" value="AAA50022.1"/>
    <property type="molecule type" value="mRNA"/>
</dbReference>
<dbReference type="EMBL" id="L05384">
    <property type="protein sequence ID" value="AAA50023.1"/>
    <property type="molecule type" value="Genomic_DNA"/>
</dbReference>
<dbReference type="EMBL" id="BC062841">
    <property type="protein sequence ID" value="AAH62841.1"/>
    <property type="molecule type" value="mRNA"/>
</dbReference>
<dbReference type="PIR" id="I51732">
    <property type="entry name" value="I51733"/>
</dbReference>
<dbReference type="RefSeq" id="NP_001153240.1">
    <property type="nucleotide sequence ID" value="NM_001159768.1"/>
</dbReference>
<dbReference type="RefSeq" id="NP_571238.1">
    <property type="nucleotide sequence ID" value="NM_131163.2"/>
</dbReference>
<dbReference type="PDB" id="4M9O">
    <property type="method" value="X-ray"/>
    <property type="resolution" value="2.14 A"/>
    <property type="chains" value="A=19-116"/>
</dbReference>
<dbReference type="PDBsum" id="4M9O"/>
<dbReference type="SMR" id="Q04475"/>
<dbReference type="FunCoup" id="Q04475">
    <property type="interactions" value="895"/>
</dbReference>
<dbReference type="STRING" id="7955.ENSDARP00000069612"/>
<dbReference type="PaxDb" id="7955-ENSDARP00000069612"/>
<dbReference type="Ensembl" id="ENSDART00000075127">
    <property type="protein sequence ID" value="ENSDARP00000069612"/>
    <property type="gene ID" value="ENSDARG00000053136"/>
</dbReference>
<dbReference type="Ensembl" id="ENSDART00000131026">
    <property type="protein sequence ID" value="ENSDARP00000110049"/>
    <property type="gene ID" value="ENSDARG00000053136"/>
</dbReference>
<dbReference type="GeneID" id="30400"/>
<dbReference type="KEGG" id="dre:30400"/>
<dbReference type="AGR" id="ZFIN:ZDB-GENE-980526-88"/>
<dbReference type="CTD" id="567"/>
<dbReference type="ZFIN" id="ZDB-GENE-980526-88">
    <property type="gene designation" value="b2m"/>
</dbReference>
<dbReference type="eggNOG" id="ENOG502S8GM">
    <property type="taxonomic scope" value="Eukaryota"/>
</dbReference>
<dbReference type="HOGENOM" id="CLU_163066_1_0_1"/>
<dbReference type="InParanoid" id="Q04475"/>
<dbReference type="OMA" id="NTYIWEA"/>
<dbReference type="OrthoDB" id="9949628at2759"/>
<dbReference type="PhylomeDB" id="Q04475"/>
<dbReference type="TreeFam" id="TF334167"/>
<dbReference type="Reactome" id="R-DRE-1236974">
    <property type="pathway name" value="ER-Phagosome pathway"/>
</dbReference>
<dbReference type="Reactome" id="R-DRE-1236977">
    <property type="pathway name" value="Endosomal/Vacuolar pathway"/>
</dbReference>
<dbReference type="Reactome" id="R-DRE-2132295">
    <property type="pathway name" value="MHC class II antigen presentation"/>
</dbReference>
<dbReference type="Reactome" id="R-DRE-6798695">
    <property type="pathway name" value="Neutrophil degranulation"/>
</dbReference>
<dbReference type="Reactome" id="R-DRE-983170">
    <property type="pathway name" value="Antigen Presentation: Folding, assembly and peptide loading of class I MHC"/>
</dbReference>
<dbReference type="EvolutionaryTrace" id="Q04475"/>
<dbReference type="PRO" id="PR:Q04475"/>
<dbReference type="Proteomes" id="UP000000437">
    <property type="component" value="Chromosome 4"/>
</dbReference>
<dbReference type="Bgee" id="ENSDARG00000053136">
    <property type="expression patterns" value="Expressed in pharyngeal gill and 24 other cell types or tissues"/>
</dbReference>
<dbReference type="ExpressionAtlas" id="Q04475">
    <property type="expression patterns" value="baseline"/>
</dbReference>
<dbReference type="GO" id="GO:0005576">
    <property type="term" value="C:extracellular region"/>
    <property type="evidence" value="ECO:0007669"/>
    <property type="project" value="UniProtKB-SubCell"/>
</dbReference>
<dbReference type="GO" id="GO:0031902">
    <property type="term" value="C:late endosome membrane"/>
    <property type="evidence" value="ECO:0000318"/>
    <property type="project" value="GO_Central"/>
</dbReference>
<dbReference type="GO" id="GO:0005765">
    <property type="term" value="C:lysosomal membrane"/>
    <property type="evidence" value="ECO:0000318"/>
    <property type="project" value="GO_Central"/>
</dbReference>
<dbReference type="GO" id="GO:0042612">
    <property type="term" value="C:MHC class I protein complex"/>
    <property type="evidence" value="ECO:0007669"/>
    <property type="project" value="UniProtKB-KW"/>
</dbReference>
<dbReference type="GO" id="GO:0042613">
    <property type="term" value="C:MHC class II protein complex"/>
    <property type="evidence" value="ECO:0000318"/>
    <property type="project" value="GO_Central"/>
</dbReference>
<dbReference type="GO" id="GO:0023026">
    <property type="term" value="F:MHC class II protein complex binding"/>
    <property type="evidence" value="ECO:0000318"/>
    <property type="project" value="GO_Central"/>
</dbReference>
<dbReference type="GO" id="GO:0042605">
    <property type="term" value="F:peptide antigen binding"/>
    <property type="evidence" value="ECO:0000318"/>
    <property type="project" value="GO_Central"/>
</dbReference>
<dbReference type="GO" id="GO:0019886">
    <property type="term" value="P:antigen processing and presentation of exogenous peptide antigen via MHC class II"/>
    <property type="evidence" value="ECO:0000318"/>
    <property type="project" value="GO_Central"/>
</dbReference>
<dbReference type="GO" id="GO:0002474">
    <property type="term" value="P:antigen processing and presentation of peptide antigen via MHC class I"/>
    <property type="evidence" value="ECO:0007669"/>
    <property type="project" value="UniProtKB-KW"/>
</dbReference>
<dbReference type="GO" id="GO:0006955">
    <property type="term" value="P:immune response"/>
    <property type="evidence" value="ECO:0007669"/>
    <property type="project" value="InterPro"/>
</dbReference>
<dbReference type="GO" id="GO:0002503">
    <property type="term" value="P:peptide antigen assembly with MHC class II protein complex"/>
    <property type="evidence" value="ECO:0000318"/>
    <property type="project" value="GO_Central"/>
</dbReference>
<dbReference type="GO" id="GO:0050778">
    <property type="term" value="P:positive regulation of immune response"/>
    <property type="evidence" value="ECO:0000318"/>
    <property type="project" value="GO_Central"/>
</dbReference>
<dbReference type="GO" id="GO:0050870">
    <property type="term" value="P:positive regulation of T cell activation"/>
    <property type="evidence" value="ECO:0000318"/>
    <property type="project" value="GO_Central"/>
</dbReference>
<dbReference type="CDD" id="cd05770">
    <property type="entry name" value="IgC1_beta2m"/>
    <property type="match status" value="1"/>
</dbReference>
<dbReference type="FunFam" id="2.60.40.10:FF:001005">
    <property type="entry name" value="Beta-2-microglobulin"/>
    <property type="match status" value="1"/>
</dbReference>
<dbReference type="Gene3D" id="2.60.40.10">
    <property type="entry name" value="Immunoglobulins"/>
    <property type="match status" value="1"/>
</dbReference>
<dbReference type="InterPro" id="IPR015707">
    <property type="entry name" value="B2Microglobulin"/>
</dbReference>
<dbReference type="InterPro" id="IPR007110">
    <property type="entry name" value="Ig-like_dom"/>
</dbReference>
<dbReference type="InterPro" id="IPR036179">
    <property type="entry name" value="Ig-like_dom_sf"/>
</dbReference>
<dbReference type="InterPro" id="IPR013783">
    <property type="entry name" value="Ig-like_fold"/>
</dbReference>
<dbReference type="InterPro" id="IPR003006">
    <property type="entry name" value="Ig/MHC_CS"/>
</dbReference>
<dbReference type="InterPro" id="IPR003597">
    <property type="entry name" value="Ig_C1-set"/>
</dbReference>
<dbReference type="InterPro" id="IPR050160">
    <property type="entry name" value="MHC/Immunoglobulin"/>
</dbReference>
<dbReference type="PANTHER" id="PTHR19944:SF62">
    <property type="entry name" value="BETA-2-MICROGLOBULIN"/>
    <property type="match status" value="1"/>
</dbReference>
<dbReference type="PANTHER" id="PTHR19944">
    <property type="entry name" value="MHC CLASS II-RELATED"/>
    <property type="match status" value="1"/>
</dbReference>
<dbReference type="Pfam" id="PF07654">
    <property type="entry name" value="C1-set"/>
    <property type="match status" value="1"/>
</dbReference>
<dbReference type="SMART" id="SM00407">
    <property type="entry name" value="IGc1"/>
    <property type="match status" value="1"/>
</dbReference>
<dbReference type="SUPFAM" id="SSF48726">
    <property type="entry name" value="Immunoglobulin"/>
    <property type="match status" value="1"/>
</dbReference>
<dbReference type="PROSITE" id="PS50835">
    <property type="entry name" value="IG_LIKE"/>
    <property type="match status" value="1"/>
</dbReference>
<dbReference type="PROSITE" id="PS00290">
    <property type="entry name" value="IG_MHC"/>
    <property type="match status" value="1"/>
</dbReference>
<keyword id="KW-0002">3D-structure</keyword>
<keyword id="KW-1015">Disulfide bond</keyword>
<keyword id="KW-0391">Immunity</keyword>
<keyword id="KW-0393">Immunoglobulin domain</keyword>
<keyword id="KW-0490">MHC I</keyword>
<keyword id="KW-1185">Reference proteome</keyword>
<keyword id="KW-0964">Secreted</keyword>
<keyword id="KW-0732">Signal</keyword>
<feature type="signal peptide" evidence="2">
    <location>
        <begin position="1"/>
        <end position="19"/>
    </location>
</feature>
<feature type="chain" id="PRO_0000018807" description="Beta-2-microglobulin">
    <location>
        <begin position="20"/>
        <end position="116"/>
    </location>
</feature>
<feature type="domain" description="Ig-like C1-type">
    <location>
        <begin position="24"/>
        <end position="111"/>
    </location>
</feature>
<feature type="disulfide bond" evidence="3">
    <location>
        <begin position="44"/>
        <end position="99"/>
    </location>
</feature>
<feature type="strand" evidence="5">
    <location>
        <begin position="25"/>
        <end position="32"/>
    </location>
</feature>
<feature type="strand" evidence="5">
    <location>
        <begin position="40"/>
        <end position="48"/>
    </location>
</feature>
<feature type="strand" evidence="5">
    <location>
        <begin position="50"/>
        <end position="52"/>
    </location>
</feature>
<feature type="strand" evidence="5">
    <location>
        <begin position="55"/>
        <end position="60"/>
    </location>
</feature>
<feature type="strand" evidence="5">
    <location>
        <begin position="74"/>
        <end position="76"/>
    </location>
</feature>
<feature type="turn" evidence="5">
    <location>
        <begin position="77"/>
        <end position="79"/>
    </location>
</feature>
<feature type="strand" evidence="5">
    <location>
        <begin position="80"/>
        <end position="89"/>
    </location>
</feature>
<feature type="strand" evidence="5">
    <location>
        <begin position="97"/>
        <end position="103"/>
    </location>
</feature>
<feature type="strand" evidence="5">
    <location>
        <begin position="106"/>
        <end position="111"/>
    </location>
</feature>
<evidence type="ECO:0000250" key="1"/>
<evidence type="ECO:0000255" key="2"/>
<evidence type="ECO:0000255" key="3">
    <source>
        <dbReference type="PROSITE-ProRule" id="PRU00114"/>
    </source>
</evidence>
<evidence type="ECO:0000305" key="4"/>
<evidence type="ECO:0007829" key="5">
    <source>
        <dbReference type="PDB" id="4M9O"/>
    </source>
</evidence>
<gene>
    <name type="primary">b2m</name>
</gene>
<reference key="1">
    <citation type="journal article" date="1993" name="Immunogenetics">
        <title>Cloning of the beta 2-microglobulin gene in the zebrafish.</title>
        <authorList>
            <person name="Ono H."/>
            <person name="Figueroa F."/>
            <person name="O'Huigin C."/>
            <person name="Klein K.A."/>
        </authorList>
    </citation>
    <scope>NUCLEOTIDE SEQUENCE [GENOMIC DNA / MRNA]</scope>
</reference>
<reference key="2">
    <citation type="submission" date="2003-11" db="EMBL/GenBank/DDBJ databases">
        <authorList>
            <consortium name="NIH - Zebrafish Gene Collection (ZGC) project"/>
        </authorList>
    </citation>
    <scope>NUCLEOTIDE SEQUENCE [LARGE SCALE MRNA]</scope>
</reference>
<comment type="function">
    <text evidence="1">Component of the class I major histocompatibility complex (MHC). Involved in the presentation of peptide antigens to the immune system (By similarity).</text>
</comment>
<comment type="subunit">
    <text evidence="1">Heterodimer of an alpha chain and a beta chain. Beta-2-microglobulin is the beta-chain of major histocompatibility complex class I molecules (By similarity).</text>
</comment>
<comment type="subcellular location">
    <subcellularLocation>
        <location evidence="1">Secreted</location>
    </subcellularLocation>
</comment>
<comment type="similarity">
    <text evidence="4">Belongs to the beta-2-microglobulin family.</text>
</comment>
<proteinExistence type="evidence at protein level"/>
<name>B2MG_DANRE</name>
<organism>
    <name type="scientific">Danio rerio</name>
    <name type="common">Zebrafish</name>
    <name type="synonym">Brachydanio rerio</name>
    <dbReference type="NCBI Taxonomy" id="7955"/>
    <lineage>
        <taxon>Eukaryota</taxon>
        <taxon>Metazoa</taxon>
        <taxon>Chordata</taxon>
        <taxon>Craniata</taxon>
        <taxon>Vertebrata</taxon>
        <taxon>Euteleostomi</taxon>
        <taxon>Actinopterygii</taxon>
        <taxon>Neopterygii</taxon>
        <taxon>Teleostei</taxon>
        <taxon>Ostariophysi</taxon>
        <taxon>Cypriniformes</taxon>
        <taxon>Danionidae</taxon>
        <taxon>Danioninae</taxon>
        <taxon>Danio</taxon>
    </lineage>
</organism>
<protein>
    <recommendedName>
        <fullName>Beta-2-microglobulin</fullName>
    </recommendedName>
</protein>
<sequence length="116" mass="13289">MRALITFALLCLLYITVQGKVSTPKVHVYSHFPGEYGKPNTLICYVSSFHPPDISIELLKNGQVMSDTKQTDLAFEKGWQFHLTKSVAFTPEKGDEYTCSVRHMKETKKFSWEPNM</sequence>